<gene>
    <name evidence="1" type="primary">ftsQ</name>
    <name type="ordered locus">RF_1034</name>
</gene>
<protein>
    <recommendedName>
        <fullName evidence="1">Cell division protein FtsQ</fullName>
    </recommendedName>
</protein>
<organism>
    <name type="scientific">Rickettsia felis (strain ATCC VR-1525 / URRWXCal2)</name>
    <name type="common">Rickettsia azadi</name>
    <dbReference type="NCBI Taxonomy" id="315456"/>
    <lineage>
        <taxon>Bacteria</taxon>
        <taxon>Pseudomonadati</taxon>
        <taxon>Pseudomonadota</taxon>
        <taxon>Alphaproteobacteria</taxon>
        <taxon>Rickettsiales</taxon>
        <taxon>Rickettsiaceae</taxon>
        <taxon>Rickettsieae</taxon>
        <taxon>Rickettsia</taxon>
        <taxon>spotted fever group</taxon>
    </lineage>
</organism>
<dbReference type="EMBL" id="CP000053">
    <property type="protein sequence ID" value="AAY61885.1"/>
    <property type="molecule type" value="Genomic_DNA"/>
</dbReference>
<dbReference type="SMR" id="Q4UKP2"/>
<dbReference type="STRING" id="315456.RF_1034"/>
<dbReference type="KEGG" id="rfe:RF_1034"/>
<dbReference type="eggNOG" id="COG1589">
    <property type="taxonomic scope" value="Bacteria"/>
</dbReference>
<dbReference type="HOGENOM" id="CLU_061141_2_1_5"/>
<dbReference type="OrthoDB" id="9783091at2"/>
<dbReference type="Proteomes" id="UP000008548">
    <property type="component" value="Chromosome"/>
</dbReference>
<dbReference type="GO" id="GO:0032153">
    <property type="term" value="C:cell division site"/>
    <property type="evidence" value="ECO:0007669"/>
    <property type="project" value="UniProtKB-UniRule"/>
</dbReference>
<dbReference type="GO" id="GO:0005886">
    <property type="term" value="C:plasma membrane"/>
    <property type="evidence" value="ECO:0007669"/>
    <property type="project" value="UniProtKB-SubCell"/>
</dbReference>
<dbReference type="GO" id="GO:0090529">
    <property type="term" value="P:cell septum assembly"/>
    <property type="evidence" value="ECO:0007669"/>
    <property type="project" value="InterPro"/>
</dbReference>
<dbReference type="GO" id="GO:0043093">
    <property type="term" value="P:FtsZ-dependent cytokinesis"/>
    <property type="evidence" value="ECO:0007669"/>
    <property type="project" value="UniProtKB-UniRule"/>
</dbReference>
<dbReference type="Gene3D" id="3.10.20.310">
    <property type="entry name" value="membrane protein fhac"/>
    <property type="match status" value="1"/>
</dbReference>
<dbReference type="HAMAP" id="MF_00911">
    <property type="entry name" value="FtsQ_subfam"/>
    <property type="match status" value="1"/>
</dbReference>
<dbReference type="InterPro" id="IPR005548">
    <property type="entry name" value="Cell_div_FtsQ/DivIB_C"/>
</dbReference>
<dbReference type="InterPro" id="IPR026579">
    <property type="entry name" value="FtsQ"/>
</dbReference>
<dbReference type="InterPro" id="IPR034746">
    <property type="entry name" value="POTRA"/>
</dbReference>
<dbReference type="InterPro" id="IPR013685">
    <property type="entry name" value="POTRA_FtsQ_type"/>
</dbReference>
<dbReference type="PANTHER" id="PTHR35851">
    <property type="entry name" value="CELL DIVISION PROTEIN FTSQ"/>
    <property type="match status" value="1"/>
</dbReference>
<dbReference type="PANTHER" id="PTHR35851:SF1">
    <property type="entry name" value="CELL DIVISION PROTEIN FTSQ"/>
    <property type="match status" value="1"/>
</dbReference>
<dbReference type="Pfam" id="PF03799">
    <property type="entry name" value="FtsQ_DivIB_C"/>
    <property type="match status" value="1"/>
</dbReference>
<dbReference type="Pfam" id="PF08478">
    <property type="entry name" value="POTRA_1"/>
    <property type="match status" value="1"/>
</dbReference>
<dbReference type="PROSITE" id="PS51779">
    <property type="entry name" value="POTRA"/>
    <property type="match status" value="1"/>
</dbReference>
<comment type="function">
    <text evidence="1">Essential cell division protein.</text>
</comment>
<comment type="subcellular location">
    <subcellularLocation>
        <location evidence="1">Cell inner membrane</location>
        <topology evidence="1">Single-pass type II membrane protein</topology>
    </subcellularLocation>
    <text evidence="1">Localizes to the division septum.</text>
</comment>
<comment type="similarity">
    <text evidence="1">Belongs to the FtsQ/DivIB family. FtsQ subfamily.</text>
</comment>
<proteinExistence type="inferred from homology"/>
<keyword id="KW-0131">Cell cycle</keyword>
<keyword id="KW-0132">Cell division</keyword>
<keyword id="KW-0997">Cell inner membrane</keyword>
<keyword id="KW-1003">Cell membrane</keyword>
<keyword id="KW-0472">Membrane</keyword>
<keyword id="KW-0812">Transmembrane</keyword>
<keyword id="KW-1133">Transmembrane helix</keyword>
<evidence type="ECO:0000255" key="1">
    <source>
        <dbReference type="HAMAP-Rule" id="MF_00911"/>
    </source>
</evidence>
<evidence type="ECO:0000255" key="2">
    <source>
        <dbReference type="PROSITE-ProRule" id="PRU01115"/>
    </source>
</evidence>
<accession>Q4UKP2</accession>
<reference key="1">
    <citation type="journal article" date="2005" name="PLoS Biol.">
        <title>The genome sequence of Rickettsia felis identifies the first putative conjugative plasmid in an obligate intracellular parasite.</title>
        <authorList>
            <person name="Ogata H."/>
            <person name="Renesto P."/>
            <person name="Audic S."/>
            <person name="Robert C."/>
            <person name="Blanc G."/>
            <person name="Fournier P.-E."/>
            <person name="Parinello H."/>
            <person name="Claverie J.-M."/>
            <person name="Raoult D."/>
        </authorList>
    </citation>
    <scope>NUCLEOTIDE SEQUENCE [LARGE SCALE GENOMIC DNA]</scope>
    <source>
        <strain>ATCC VR-1525 / URRWXCal2</strain>
    </source>
</reference>
<name>FTSQ_RICFE</name>
<sequence length="267" mass="31191">MRKKTSSNKKKQTKKTNNISLRRKLRLIYKKAILGLKIALIIFVCLFVFTKYFAGIKTYLTTNIYQTTTKLGFKLENVIIEGQQNVDEPTILKVLNANKGSPIFALKLDEIRNNLKKNKWIKEVYVSRRLPNTVYIKLFEREPIAIWQINNQLFLVDEEGYEISKNIQPFPHLLHVVGEGANIYAGKLVLELQKYPALMNKTSAAIRLGDRRWDLNLKGNISIKLPEKEFEEALKYVDALNKANKLFNQNYKALDLRDKNKYYIEKY</sequence>
<feature type="chain" id="PRO_0000280971" description="Cell division protein FtsQ">
    <location>
        <begin position="1"/>
        <end position="267"/>
    </location>
</feature>
<feature type="topological domain" description="Cytoplasmic" evidence="1">
    <location>
        <begin position="1"/>
        <end position="32"/>
    </location>
</feature>
<feature type="transmembrane region" description="Helical" evidence="1">
    <location>
        <begin position="33"/>
        <end position="53"/>
    </location>
</feature>
<feature type="topological domain" description="Periplasmic" evidence="1">
    <location>
        <begin position="54"/>
        <end position="267"/>
    </location>
</feature>
<feature type="domain" description="POTRA" evidence="2">
    <location>
        <begin position="73"/>
        <end position="141"/>
    </location>
</feature>